<reference key="1">
    <citation type="journal article" date="2005" name="Infect. Immun.">
        <title>A metalloproteinase of Coccidioides posadasii contributes to evasion of host detection.</title>
        <authorList>
            <person name="Hung C.Y."/>
            <person name="Seshan K.R."/>
            <person name="Yu J.J."/>
            <person name="Schaller R."/>
            <person name="Xue J."/>
            <person name="Basrur V."/>
            <person name="Gardner M.J."/>
            <person name="Cole G.T."/>
        </authorList>
    </citation>
    <scope>NUCLEOTIDE SEQUENCE [GENOMIC DNA]</scope>
    <source>
        <strain>C735</strain>
    </source>
</reference>
<reference key="2">
    <citation type="journal article" date="2009" name="Genome Res.">
        <title>Comparative genomic analyses of the human fungal pathogens Coccidioides and their relatives.</title>
        <authorList>
            <person name="Sharpton T.J."/>
            <person name="Stajich J.E."/>
            <person name="Rounsley S.D."/>
            <person name="Gardner M.J."/>
            <person name="Wortman J.R."/>
            <person name="Jordar V.S."/>
            <person name="Maiti R."/>
            <person name="Kodira C.D."/>
            <person name="Neafsey D.E."/>
            <person name="Zeng Q."/>
            <person name="Hung C.-Y."/>
            <person name="McMahan C."/>
            <person name="Muszewska A."/>
            <person name="Grynberg M."/>
            <person name="Mandel M.A."/>
            <person name="Kellner E.M."/>
            <person name="Barker B.M."/>
            <person name="Galgiani J.N."/>
            <person name="Orbach M.J."/>
            <person name="Kirkland T.N."/>
            <person name="Cole G.T."/>
            <person name="Henn M.R."/>
            <person name="Birren B.W."/>
            <person name="Taylor J.W."/>
        </authorList>
    </citation>
    <scope>NUCLEOTIDE SEQUENCE [LARGE SCALE GENOMIC DNA]</scope>
    <source>
        <strain>C735</strain>
    </source>
</reference>
<protein>
    <recommendedName>
        <fullName>Neutral protease 2 homolog MEP7</fullName>
        <ecNumber>3.4.24.39</ecNumber>
    </recommendedName>
    <alternativeName>
        <fullName>Deuterolysin MEP7</fullName>
    </alternativeName>
    <alternativeName>
        <fullName>Metalloproteinase 7</fullName>
    </alternativeName>
</protein>
<organism>
    <name type="scientific">Coccidioides posadasii (strain C735)</name>
    <name type="common">Valley fever fungus</name>
    <dbReference type="NCBI Taxonomy" id="222929"/>
    <lineage>
        <taxon>Eukaryota</taxon>
        <taxon>Fungi</taxon>
        <taxon>Dikarya</taxon>
        <taxon>Ascomycota</taxon>
        <taxon>Pezizomycotina</taxon>
        <taxon>Eurotiomycetes</taxon>
        <taxon>Eurotiomycetidae</taxon>
        <taxon>Onygenales</taxon>
        <taxon>Onygenaceae</taxon>
        <taxon>Coccidioides</taxon>
    </lineage>
</organism>
<gene>
    <name type="primary">MEP7</name>
    <name type="ORF">CPC735_062250</name>
</gene>
<sequence>MLLCSMVAALAALATPAFSCALPHLDLPEDNSGLDIKLDSLSNTRVKATITNKADRPLNLLKFNTFFDDGPTEKVGIFKDGNPIKFDGIMRRIQTFDLPISAFVPISPGESIEREFDIASTSDLTVGGAFDILSEGAIPYAEANQTTLTGAMVFKSNALQLKIDGEMAATVARAIQPLDRRSDVHVCRNSAKRKALMKALRNSAHLAGTAASAAYRNPRKVQEYFHTTDRTAVRSVAARLKAISRESGSTRNGATRYACEDHWNRCEPGVLAYTLPSHNLVVNCPSFYNLPALTNRCHGQDQATTVLHEFAHAPGVHEPFCKDHAYGYRSIRRLSTRLALNNADSFSLFANGRFRRRFRVIST</sequence>
<proteinExistence type="inferred from homology"/>
<feature type="signal peptide" evidence="2">
    <location>
        <begin position="1"/>
        <end position="19"/>
    </location>
</feature>
<feature type="propeptide" id="PRO_0000407076" evidence="1">
    <location>
        <begin position="20"/>
        <end position="181"/>
    </location>
</feature>
<feature type="chain" id="PRO_0000407077" description="Neutral protease 2 homolog MEP7">
    <location>
        <begin position="182"/>
        <end position="363"/>
    </location>
</feature>
<feature type="active site" evidence="3">
    <location>
        <position position="309"/>
    </location>
</feature>
<feature type="binding site" evidence="3">
    <location>
        <position position="308"/>
    </location>
    <ligand>
        <name>Zn(2+)</name>
        <dbReference type="ChEBI" id="CHEBI:29105"/>
        <note>catalytic</note>
    </ligand>
</feature>
<feature type="binding site" evidence="3">
    <location>
        <position position="312"/>
    </location>
    <ligand>
        <name>Zn(2+)</name>
        <dbReference type="ChEBI" id="CHEBI:29105"/>
        <note>catalytic</note>
    </ligand>
</feature>
<feature type="binding site" evidence="3">
    <location>
        <position position="323"/>
    </location>
    <ligand>
        <name>Zn(2+)</name>
        <dbReference type="ChEBI" id="CHEBI:29105"/>
        <note>catalytic</note>
    </ligand>
</feature>
<feature type="disulfide bond" evidence="1">
    <location>
        <begin position="187"/>
        <end position="259"/>
    </location>
</feature>
<feature type="disulfide bond" evidence="1">
    <location>
        <begin position="266"/>
        <end position="284"/>
    </location>
</feature>
<comment type="function">
    <text evidence="1">Secreted metalloproteinase that allows assimilation of proteinaceous substrates. Shows high activities on basic nuclear substrates such as histone and protamine. May be involved in virulence (By similarity).</text>
</comment>
<comment type="catalytic activity">
    <reaction>
        <text>Preferential cleavage of bonds with hydrophobic residues in P1'. Also 3-Asn-|-Gln-4 and 8-Gly-|-Ser-9 bonds in insulin B chain.</text>
        <dbReference type="EC" id="3.4.24.39"/>
    </reaction>
</comment>
<comment type="cofactor">
    <cofactor evidence="1">
        <name>Zn(2+)</name>
        <dbReference type="ChEBI" id="CHEBI:29105"/>
    </cofactor>
    <text evidence="1">Binds 1 zinc ion per subunit.</text>
</comment>
<comment type="subcellular location">
    <subcellularLocation>
        <location evidence="1">Secreted</location>
    </subcellularLocation>
</comment>
<comment type="similarity">
    <text evidence="4">Belongs to the peptidase M35 family.</text>
</comment>
<comment type="sequence caution" evidence="4">
    <conflict type="erroneous initiation">
        <sequence resource="EMBL-CDS" id="AAY45757"/>
    </conflict>
    <text>Truncated N-terminus.</text>
</comment>
<name>MEP7_COCP7</name>
<evidence type="ECO:0000250" key="1"/>
<evidence type="ECO:0000255" key="2"/>
<evidence type="ECO:0000255" key="3">
    <source>
        <dbReference type="PROSITE-ProRule" id="PRU10095"/>
    </source>
</evidence>
<evidence type="ECO:0000305" key="4"/>
<accession>C5P3T4</accession>
<accession>Q3KRQ6</accession>
<dbReference type="EC" id="3.4.24.39"/>
<dbReference type="EMBL" id="AY987811">
    <property type="protein sequence ID" value="AAY45757.1"/>
    <property type="status" value="ALT_INIT"/>
    <property type="molecule type" value="Genomic_DNA"/>
</dbReference>
<dbReference type="EMBL" id="ACFW01000015">
    <property type="protein sequence ID" value="EER28352.1"/>
    <property type="molecule type" value="Genomic_DNA"/>
</dbReference>
<dbReference type="RefSeq" id="XP_003070497.1">
    <property type="nucleotide sequence ID" value="XM_003070451.1"/>
</dbReference>
<dbReference type="SMR" id="C5P3T4"/>
<dbReference type="MEROPS" id="M35.001"/>
<dbReference type="MEROPS" id="M35.002"/>
<dbReference type="GeneID" id="9695992"/>
<dbReference type="KEGG" id="cpw:9695992"/>
<dbReference type="VEuPathDB" id="FungiDB:CPC735_062250"/>
<dbReference type="HOGENOM" id="CLU_039313_1_0_1"/>
<dbReference type="OrthoDB" id="412874at2759"/>
<dbReference type="BRENDA" id="3.4.24.39">
    <property type="organism ID" value="9184"/>
</dbReference>
<dbReference type="Proteomes" id="UP000009084">
    <property type="component" value="Unassembled WGS sequence"/>
</dbReference>
<dbReference type="GO" id="GO:0005576">
    <property type="term" value="C:extracellular region"/>
    <property type="evidence" value="ECO:0007669"/>
    <property type="project" value="UniProtKB-SubCell"/>
</dbReference>
<dbReference type="GO" id="GO:0046872">
    <property type="term" value="F:metal ion binding"/>
    <property type="evidence" value="ECO:0007669"/>
    <property type="project" value="UniProtKB-KW"/>
</dbReference>
<dbReference type="GO" id="GO:0004222">
    <property type="term" value="F:metalloendopeptidase activity"/>
    <property type="evidence" value="ECO:0007669"/>
    <property type="project" value="InterPro"/>
</dbReference>
<dbReference type="GO" id="GO:0006508">
    <property type="term" value="P:proteolysis"/>
    <property type="evidence" value="ECO:0007669"/>
    <property type="project" value="UniProtKB-KW"/>
</dbReference>
<dbReference type="CDD" id="cd11008">
    <property type="entry name" value="M35_deuterolysin_like"/>
    <property type="match status" value="1"/>
</dbReference>
<dbReference type="Gene3D" id="2.60.40.2970">
    <property type="match status" value="1"/>
</dbReference>
<dbReference type="Gene3D" id="3.40.390.10">
    <property type="entry name" value="Collagenase (Catalytic Domain)"/>
    <property type="match status" value="1"/>
</dbReference>
<dbReference type="InterPro" id="IPR050414">
    <property type="entry name" value="Fungal_M35_metalloproteases"/>
</dbReference>
<dbReference type="InterPro" id="IPR024079">
    <property type="entry name" value="MetalloPept_cat_dom_sf"/>
</dbReference>
<dbReference type="InterPro" id="IPR001384">
    <property type="entry name" value="Peptidase_M35"/>
</dbReference>
<dbReference type="PANTHER" id="PTHR37016">
    <property type="match status" value="1"/>
</dbReference>
<dbReference type="PANTHER" id="PTHR37016:SF3">
    <property type="entry name" value="NEUTRAL PROTEASE 2-RELATED"/>
    <property type="match status" value="1"/>
</dbReference>
<dbReference type="Pfam" id="PF02102">
    <property type="entry name" value="Peptidase_M35"/>
    <property type="match status" value="1"/>
</dbReference>
<dbReference type="PRINTS" id="PR00768">
    <property type="entry name" value="DEUTEROLYSIN"/>
</dbReference>
<dbReference type="SUPFAM" id="SSF55486">
    <property type="entry name" value="Metalloproteases ('zincins'), catalytic domain"/>
    <property type="match status" value="1"/>
</dbReference>
<dbReference type="PROSITE" id="PS00142">
    <property type="entry name" value="ZINC_PROTEASE"/>
    <property type="match status" value="1"/>
</dbReference>
<keyword id="KW-0165">Cleavage on pair of basic residues</keyword>
<keyword id="KW-1015">Disulfide bond</keyword>
<keyword id="KW-0378">Hydrolase</keyword>
<keyword id="KW-0479">Metal-binding</keyword>
<keyword id="KW-0482">Metalloprotease</keyword>
<keyword id="KW-0645">Protease</keyword>
<keyword id="KW-0964">Secreted</keyword>
<keyword id="KW-0732">Signal</keyword>
<keyword id="KW-0843">Virulence</keyword>
<keyword id="KW-0862">Zinc</keyword>
<keyword id="KW-0865">Zymogen</keyword>